<evidence type="ECO:0000255" key="1">
    <source>
        <dbReference type="HAMAP-Rule" id="MF_00225"/>
    </source>
</evidence>
<keyword id="KW-1003">Cell membrane</keyword>
<keyword id="KW-0285">Flavoprotein</keyword>
<keyword id="KW-0288">FMN</keyword>
<keyword id="KW-0472">Membrane</keyword>
<keyword id="KW-0560">Oxidoreductase</keyword>
<keyword id="KW-0665">Pyrimidine biosynthesis</keyword>
<protein>
    <recommendedName>
        <fullName evidence="1">Dihydroorotate dehydrogenase (quinone)</fullName>
        <ecNumber evidence="1">1.3.5.2</ecNumber>
    </recommendedName>
    <alternativeName>
        <fullName evidence="1">DHOdehase</fullName>
        <shortName evidence="1">DHOD</shortName>
        <shortName evidence="1">DHODase</shortName>
    </alternativeName>
    <alternativeName>
        <fullName evidence="1">Dihydroorotate oxidase</fullName>
    </alternativeName>
</protein>
<accession>B5FQY8</accession>
<gene>
    <name evidence="1" type="primary">pyrD</name>
    <name type="ordered locus">SeD_A1133</name>
</gene>
<name>PYRD_SALDC</name>
<sequence length="336" mass="36740">MYYPFVRKALFQLDPERAHEFTFQQLRRITGTPLEALVRQKVPTKPVTCMGLTFKNPLGLAAGLDKDGECIDALGAMGFGSLEIGTVTPRPQPGNDKPRLFRLVDAEGLINRMGFNNLGVDNLVENVKKAHFDGILGINIGKNKDTPVENGKDDYLICMEKVYAYAGYIAINISSPNTPGLRTLQYGDALDDLLTAIKNKQNDLQAIHHKYVPVAVKIAPDLCEEELIQVADSLLRHNIDGVIATNTTLDRSLVQGMKNCQQTGGLSGRPLQLKSTEIIRRLSQELKGQLPIIGVGGIDSVIAAREKIAAGATLVQIYSGFIFKGPPLIKEIVTHI</sequence>
<dbReference type="EC" id="1.3.5.2" evidence="1"/>
<dbReference type="EMBL" id="CP001144">
    <property type="protein sequence ID" value="ACH75082.1"/>
    <property type="molecule type" value="Genomic_DNA"/>
</dbReference>
<dbReference type="RefSeq" id="WP_000291723.1">
    <property type="nucleotide sequence ID" value="NC_011205.1"/>
</dbReference>
<dbReference type="SMR" id="B5FQY8"/>
<dbReference type="KEGG" id="sed:SeD_A1133"/>
<dbReference type="HOGENOM" id="CLU_013640_2_0_6"/>
<dbReference type="UniPathway" id="UPA00070">
    <property type="reaction ID" value="UER00946"/>
</dbReference>
<dbReference type="Proteomes" id="UP000008322">
    <property type="component" value="Chromosome"/>
</dbReference>
<dbReference type="GO" id="GO:0005737">
    <property type="term" value="C:cytoplasm"/>
    <property type="evidence" value="ECO:0007669"/>
    <property type="project" value="InterPro"/>
</dbReference>
<dbReference type="GO" id="GO:0005886">
    <property type="term" value="C:plasma membrane"/>
    <property type="evidence" value="ECO:0007669"/>
    <property type="project" value="UniProtKB-SubCell"/>
</dbReference>
<dbReference type="GO" id="GO:0106430">
    <property type="term" value="F:dihydroorotate dehydrogenase (quinone) activity"/>
    <property type="evidence" value="ECO:0007669"/>
    <property type="project" value="UniProtKB-EC"/>
</dbReference>
<dbReference type="GO" id="GO:0006207">
    <property type="term" value="P:'de novo' pyrimidine nucleobase biosynthetic process"/>
    <property type="evidence" value="ECO:0007669"/>
    <property type="project" value="InterPro"/>
</dbReference>
<dbReference type="GO" id="GO:0044205">
    <property type="term" value="P:'de novo' UMP biosynthetic process"/>
    <property type="evidence" value="ECO:0007669"/>
    <property type="project" value="UniProtKB-UniRule"/>
</dbReference>
<dbReference type="CDD" id="cd04738">
    <property type="entry name" value="DHOD_2_like"/>
    <property type="match status" value="1"/>
</dbReference>
<dbReference type="FunFam" id="3.20.20.70:FF:000028">
    <property type="entry name" value="Dihydroorotate dehydrogenase (quinone)"/>
    <property type="match status" value="1"/>
</dbReference>
<dbReference type="Gene3D" id="3.20.20.70">
    <property type="entry name" value="Aldolase class I"/>
    <property type="match status" value="1"/>
</dbReference>
<dbReference type="HAMAP" id="MF_00225">
    <property type="entry name" value="DHO_dh_type2"/>
    <property type="match status" value="1"/>
</dbReference>
<dbReference type="InterPro" id="IPR013785">
    <property type="entry name" value="Aldolase_TIM"/>
</dbReference>
<dbReference type="InterPro" id="IPR050074">
    <property type="entry name" value="DHO_dehydrogenase"/>
</dbReference>
<dbReference type="InterPro" id="IPR012135">
    <property type="entry name" value="Dihydroorotate_DH_1_2"/>
</dbReference>
<dbReference type="InterPro" id="IPR005719">
    <property type="entry name" value="Dihydroorotate_DH_2"/>
</dbReference>
<dbReference type="InterPro" id="IPR005720">
    <property type="entry name" value="Dihydroorotate_DH_cat"/>
</dbReference>
<dbReference type="InterPro" id="IPR001295">
    <property type="entry name" value="Dihydroorotate_DH_CS"/>
</dbReference>
<dbReference type="NCBIfam" id="NF003644">
    <property type="entry name" value="PRK05286.1-1"/>
    <property type="match status" value="1"/>
</dbReference>
<dbReference type="NCBIfam" id="NF003645">
    <property type="entry name" value="PRK05286.1-2"/>
    <property type="match status" value="1"/>
</dbReference>
<dbReference type="NCBIfam" id="NF003646">
    <property type="entry name" value="PRK05286.1-4"/>
    <property type="match status" value="1"/>
</dbReference>
<dbReference type="NCBIfam" id="NF003652">
    <property type="entry name" value="PRK05286.2-5"/>
    <property type="match status" value="1"/>
</dbReference>
<dbReference type="NCBIfam" id="TIGR01036">
    <property type="entry name" value="pyrD_sub2"/>
    <property type="match status" value="1"/>
</dbReference>
<dbReference type="PANTHER" id="PTHR48109:SF4">
    <property type="entry name" value="DIHYDROOROTATE DEHYDROGENASE (QUINONE), MITOCHONDRIAL"/>
    <property type="match status" value="1"/>
</dbReference>
<dbReference type="PANTHER" id="PTHR48109">
    <property type="entry name" value="DIHYDROOROTATE DEHYDROGENASE (QUINONE), MITOCHONDRIAL-RELATED"/>
    <property type="match status" value="1"/>
</dbReference>
<dbReference type="Pfam" id="PF01180">
    <property type="entry name" value="DHO_dh"/>
    <property type="match status" value="1"/>
</dbReference>
<dbReference type="PIRSF" id="PIRSF000164">
    <property type="entry name" value="DHO_oxidase"/>
    <property type="match status" value="1"/>
</dbReference>
<dbReference type="SUPFAM" id="SSF51395">
    <property type="entry name" value="FMN-linked oxidoreductases"/>
    <property type="match status" value="1"/>
</dbReference>
<dbReference type="PROSITE" id="PS00911">
    <property type="entry name" value="DHODEHASE_1"/>
    <property type="match status" value="1"/>
</dbReference>
<dbReference type="PROSITE" id="PS00912">
    <property type="entry name" value="DHODEHASE_2"/>
    <property type="match status" value="1"/>
</dbReference>
<organism>
    <name type="scientific">Salmonella dublin (strain CT_02021853)</name>
    <dbReference type="NCBI Taxonomy" id="439851"/>
    <lineage>
        <taxon>Bacteria</taxon>
        <taxon>Pseudomonadati</taxon>
        <taxon>Pseudomonadota</taxon>
        <taxon>Gammaproteobacteria</taxon>
        <taxon>Enterobacterales</taxon>
        <taxon>Enterobacteriaceae</taxon>
        <taxon>Salmonella</taxon>
    </lineage>
</organism>
<feature type="chain" id="PRO_1000100282" description="Dihydroorotate dehydrogenase (quinone)">
    <location>
        <begin position="1"/>
        <end position="336"/>
    </location>
</feature>
<feature type="active site" description="Nucleophile" evidence="1">
    <location>
        <position position="175"/>
    </location>
</feature>
<feature type="binding site" evidence="1">
    <location>
        <begin position="62"/>
        <end position="66"/>
    </location>
    <ligand>
        <name>FMN</name>
        <dbReference type="ChEBI" id="CHEBI:58210"/>
    </ligand>
</feature>
<feature type="binding site" evidence="1">
    <location>
        <position position="66"/>
    </location>
    <ligand>
        <name>substrate</name>
    </ligand>
</feature>
<feature type="binding site" evidence="1">
    <location>
        <position position="86"/>
    </location>
    <ligand>
        <name>FMN</name>
        <dbReference type="ChEBI" id="CHEBI:58210"/>
    </ligand>
</feature>
<feature type="binding site" evidence="1">
    <location>
        <begin position="111"/>
        <end position="115"/>
    </location>
    <ligand>
        <name>substrate</name>
    </ligand>
</feature>
<feature type="binding site" evidence="1">
    <location>
        <position position="139"/>
    </location>
    <ligand>
        <name>FMN</name>
        <dbReference type="ChEBI" id="CHEBI:58210"/>
    </ligand>
</feature>
<feature type="binding site" evidence="1">
    <location>
        <position position="172"/>
    </location>
    <ligand>
        <name>FMN</name>
        <dbReference type="ChEBI" id="CHEBI:58210"/>
    </ligand>
</feature>
<feature type="binding site" evidence="1">
    <location>
        <position position="172"/>
    </location>
    <ligand>
        <name>substrate</name>
    </ligand>
</feature>
<feature type="binding site" evidence="1">
    <location>
        <position position="177"/>
    </location>
    <ligand>
        <name>substrate</name>
    </ligand>
</feature>
<feature type="binding site" evidence="1">
    <location>
        <position position="217"/>
    </location>
    <ligand>
        <name>FMN</name>
        <dbReference type="ChEBI" id="CHEBI:58210"/>
    </ligand>
</feature>
<feature type="binding site" evidence="1">
    <location>
        <position position="245"/>
    </location>
    <ligand>
        <name>FMN</name>
        <dbReference type="ChEBI" id="CHEBI:58210"/>
    </ligand>
</feature>
<feature type="binding site" evidence="1">
    <location>
        <begin position="246"/>
        <end position="247"/>
    </location>
    <ligand>
        <name>substrate</name>
    </ligand>
</feature>
<feature type="binding site" evidence="1">
    <location>
        <position position="268"/>
    </location>
    <ligand>
        <name>FMN</name>
        <dbReference type="ChEBI" id="CHEBI:58210"/>
    </ligand>
</feature>
<feature type="binding site" evidence="1">
    <location>
        <position position="297"/>
    </location>
    <ligand>
        <name>FMN</name>
        <dbReference type="ChEBI" id="CHEBI:58210"/>
    </ligand>
</feature>
<feature type="binding site" evidence="1">
    <location>
        <begin position="318"/>
        <end position="319"/>
    </location>
    <ligand>
        <name>FMN</name>
        <dbReference type="ChEBI" id="CHEBI:58210"/>
    </ligand>
</feature>
<reference key="1">
    <citation type="journal article" date="2011" name="J. Bacteriol.">
        <title>Comparative genomics of 28 Salmonella enterica isolates: evidence for CRISPR-mediated adaptive sublineage evolution.</title>
        <authorList>
            <person name="Fricke W.F."/>
            <person name="Mammel M.K."/>
            <person name="McDermott P.F."/>
            <person name="Tartera C."/>
            <person name="White D.G."/>
            <person name="Leclerc J.E."/>
            <person name="Ravel J."/>
            <person name="Cebula T.A."/>
        </authorList>
    </citation>
    <scope>NUCLEOTIDE SEQUENCE [LARGE SCALE GENOMIC DNA]</scope>
    <source>
        <strain>CT_02021853</strain>
    </source>
</reference>
<comment type="function">
    <text evidence="1">Catalyzes the conversion of dihydroorotate to orotate with quinone as electron acceptor.</text>
</comment>
<comment type="catalytic activity">
    <reaction evidence="1">
        <text>(S)-dihydroorotate + a quinone = orotate + a quinol</text>
        <dbReference type="Rhea" id="RHEA:30187"/>
        <dbReference type="ChEBI" id="CHEBI:24646"/>
        <dbReference type="ChEBI" id="CHEBI:30839"/>
        <dbReference type="ChEBI" id="CHEBI:30864"/>
        <dbReference type="ChEBI" id="CHEBI:132124"/>
        <dbReference type="EC" id="1.3.5.2"/>
    </reaction>
</comment>
<comment type="cofactor">
    <cofactor evidence="1">
        <name>FMN</name>
        <dbReference type="ChEBI" id="CHEBI:58210"/>
    </cofactor>
    <text evidence="1">Binds 1 FMN per subunit.</text>
</comment>
<comment type="pathway">
    <text evidence="1">Pyrimidine metabolism; UMP biosynthesis via de novo pathway; orotate from (S)-dihydroorotate (quinone route): step 1/1.</text>
</comment>
<comment type="subunit">
    <text evidence="1">Monomer.</text>
</comment>
<comment type="subcellular location">
    <subcellularLocation>
        <location evidence="1">Cell membrane</location>
        <topology evidence="1">Peripheral membrane protein</topology>
    </subcellularLocation>
</comment>
<comment type="similarity">
    <text evidence="1">Belongs to the dihydroorotate dehydrogenase family. Type 2 subfamily.</text>
</comment>
<proteinExistence type="inferred from homology"/>